<gene>
    <name evidence="1" type="primary">dapB</name>
    <name type="ordered locus">SPN23F15220</name>
</gene>
<evidence type="ECO:0000255" key="1">
    <source>
        <dbReference type="HAMAP-Rule" id="MF_00102"/>
    </source>
</evidence>
<evidence type="ECO:0000305" key="2"/>
<keyword id="KW-0028">Amino-acid biosynthesis</keyword>
<keyword id="KW-0963">Cytoplasm</keyword>
<keyword id="KW-0220">Diaminopimelate biosynthesis</keyword>
<keyword id="KW-0457">Lysine biosynthesis</keyword>
<keyword id="KW-0520">NAD</keyword>
<keyword id="KW-0521">NADP</keyword>
<keyword id="KW-0560">Oxidoreductase</keyword>
<comment type="function">
    <text evidence="1">Catalyzes the conversion of 4-hydroxy-tetrahydrodipicolinate (HTPA) to tetrahydrodipicolinate.</text>
</comment>
<comment type="catalytic activity">
    <reaction evidence="1">
        <text>(S)-2,3,4,5-tetrahydrodipicolinate + NAD(+) + H2O = (2S,4S)-4-hydroxy-2,3,4,5-tetrahydrodipicolinate + NADH + H(+)</text>
        <dbReference type="Rhea" id="RHEA:35323"/>
        <dbReference type="ChEBI" id="CHEBI:15377"/>
        <dbReference type="ChEBI" id="CHEBI:15378"/>
        <dbReference type="ChEBI" id="CHEBI:16845"/>
        <dbReference type="ChEBI" id="CHEBI:57540"/>
        <dbReference type="ChEBI" id="CHEBI:57945"/>
        <dbReference type="ChEBI" id="CHEBI:67139"/>
        <dbReference type="EC" id="1.17.1.8"/>
    </reaction>
</comment>
<comment type="catalytic activity">
    <reaction evidence="1">
        <text>(S)-2,3,4,5-tetrahydrodipicolinate + NADP(+) + H2O = (2S,4S)-4-hydroxy-2,3,4,5-tetrahydrodipicolinate + NADPH + H(+)</text>
        <dbReference type="Rhea" id="RHEA:35331"/>
        <dbReference type="ChEBI" id="CHEBI:15377"/>
        <dbReference type="ChEBI" id="CHEBI:15378"/>
        <dbReference type="ChEBI" id="CHEBI:16845"/>
        <dbReference type="ChEBI" id="CHEBI:57783"/>
        <dbReference type="ChEBI" id="CHEBI:58349"/>
        <dbReference type="ChEBI" id="CHEBI:67139"/>
        <dbReference type="EC" id="1.17.1.8"/>
    </reaction>
</comment>
<comment type="pathway">
    <text evidence="1">Amino-acid biosynthesis; L-lysine biosynthesis via DAP pathway; (S)-tetrahydrodipicolinate from L-aspartate: step 4/4.</text>
</comment>
<comment type="subcellular location">
    <subcellularLocation>
        <location evidence="1">Cytoplasm</location>
    </subcellularLocation>
</comment>
<comment type="similarity">
    <text evidence="1">Belongs to the DapB family.</text>
</comment>
<comment type="caution">
    <text evidence="2">Was originally thought to be a dihydrodipicolinate reductase (DHDPR), catalyzing the conversion of dihydrodipicolinate to tetrahydrodipicolinate. However, it was shown in E.coli that the substrate of the enzymatic reaction is not dihydrodipicolinate (DHDP) but in fact (2S,4S)-4-hydroxy-2,3,4,5-tetrahydrodipicolinic acid (HTPA), the product released by the DapA-catalyzed reaction.</text>
</comment>
<name>DAPB_STRPJ</name>
<sequence>MSIRVIIAGFKGKMGQAACQMVLTDPDLDLVAVLDPFESESEWQGIPVFKDKADLAGFEADVWVDFTTPAVAYENTRFALENGFAPVVGTTGFTSEEIAELKEFSRAQDLGGLIAPNFALGAVLLMQFATQAAKYFPNVEIIELHHDKKKDAPSGTAIKTAELMAEVRESIQQGAADEEELIAGARGADFDGMRIHSVRLPGLVAHQEVIFGNQGEGLTLRHDSYDRISFMTGVNLGIKEVVKRHELVYGLEHLL</sequence>
<reference key="1">
    <citation type="journal article" date="2009" name="J. Bacteriol.">
        <title>Role of conjugative elements in the evolution of the multidrug-resistant pandemic clone Streptococcus pneumoniae Spain23F ST81.</title>
        <authorList>
            <person name="Croucher N.J."/>
            <person name="Walker D."/>
            <person name="Romero P."/>
            <person name="Lennard N."/>
            <person name="Paterson G.K."/>
            <person name="Bason N.C."/>
            <person name="Mitchell A.M."/>
            <person name="Quail M.A."/>
            <person name="Andrew P.W."/>
            <person name="Parkhill J."/>
            <person name="Bentley S.D."/>
            <person name="Mitchell T.J."/>
        </authorList>
    </citation>
    <scope>NUCLEOTIDE SEQUENCE [LARGE SCALE GENOMIC DNA]</scope>
    <source>
        <strain>ATCC 700669 / Spain 23F-1</strain>
    </source>
</reference>
<protein>
    <recommendedName>
        <fullName evidence="1">4-hydroxy-tetrahydrodipicolinate reductase</fullName>
        <shortName evidence="1">HTPA reductase</shortName>
        <ecNumber evidence="1">1.17.1.8</ecNumber>
    </recommendedName>
</protein>
<accession>B8ZLL9</accession>
<proteinExistence type="inferred from homology"/>
<organism>
    <name type="scientific">Streptococcus pneumoniae (strain ATCC 700669 / Spain 23F-1)</name>
    <dbReference type="NCBI Taxonomy" id="561276"/>
    <lineage>
        <taxon>Bacteria</taxon>
        <taxon>Bacillati</taxon>
        <taxon>Bacillota</taxon>
        <taxon>Bacilli</taxon>
        <taxon>Lactobacillales</taxon>
        <taxon>Streptococcaceae</taxon>
        <taxon>Streptococcus</taxon>
    </lineage>
</organism>
<dbReference type="EC" id="1.17.1.8" evidence="1"/>
<dbReference type="EMBL" id="FM211187">
    <property type="protein sequence ID" value="CAR69302.1"/>
    <property type="molecule type" value="Genomic_DNA"/>
</dbReference>
<dbReference type="RefSeq" id="WP_000027902.1">
    <property type="nucleotide sequence ID" value="NC_011900.1"/>
</dbReference>
<dbReference type="SMR" id="B8ZLL9"/>
<dbReference type="KEGG" id="sne:SPN23F15220"/>
<dbReference type="HOGENOM" id="CLU_047479_0_1_9"/>
<dbReference type="UniPathway" id="UPA00034">
    <property type="reaction ID" value="UER00018"/>
</dbReference>
<dbReference type="GO" id="GO:0005829">
    <property type="term" value="C:cytosol"/>
    <property type="evidence" value="ECO:0007669"/>
    <property type="project" value="TreeGrafter"/>
</dbReference>
<dbReference type="GO" id="GO:0008839">
    <property type="term" value="F:4-hydroxy-tetrahydrodipicolinate reductase"/>
    <property type="evidence" value="ECO:0007669"/>
    <property type="project" value="UniProtKB-EC"/>
</dbReference>
<dbReference type="GO" id="GO:0051287">
    <property type="term" value="F:NAD binding"/>
    <property type="evidence" value="ECO:0007669"/>
    <property type="project" value="UniProtKB-UniRule"/>
</dbReference>
<dbReference type="GO" id="GO:0050661">
    <property type="term" value="F:NADP binding"/>
    <property type="evidence" value="ECO:0007669"/>
    <property type="project" value="UniProtKB-UniRule"/>
</dbReference>
<dbReference type="GO" id="GO:0016726">
    <property type="term" value="F:oxidoreductase activity, acting on CH or CH2 groups, NAD or NADP as acceptor"/>
    <property type="evidence" value="ECO:0007669"/>
    <property type="project" value="UniProtKB-UniRule"/>
</dbReference>
<dbReference type="GO" id="GO:0019877">
    <property type="term" value="P:diaminopimelate biosynthetic process"/>
    <property type="evidence" value="ECO:0007669"/>
    <property type="project" value="UniProtKB-UniRule"/>
</dbReference>
<dbReference type="GO" id="GO:0009089">
    <property type="term" value="P:lysine biosynthetic process via diaminopimelate"/>
    <property type="evidence" value="ECO:0007669"/>
    <property type="project" value="UniProtKB-UniRule"/>
</dbReference>
<dbReference type="CDD" id="cd02274">
    <property type="entry name" value="DHDPR_N"/>
    <property type="match status" value="1"/>
</dbReference>
<dbReference type="FunFam" id="3.30.360.10:FF:000009">
    <property type="entry name" value="4-hydroxy-tetrahydrodipicolinate reductase"/>
    <property type="match status" value="1"/>
</dbReference>
<dbReference type="Gene3D" id="3.30.360.10">
    <property type="entry name" value="Dihydrodipicolinate Reductase, domain 2"/>
    <property type="match status" value="1"/>
</dbReference>
<dbReference type="Gene3D" id="3.40.50.720">
    <property type="entry name" value="NAD(P)-binding Rossmann-like Domain"/>
    <property type="match status" value="1"/>
</dbReference>
<dbReference type="HAMAP" id="MF_00102">
    <property type="entry name" value="DapB"/>
    <property type="match status" value="1"/>
</dbReference>
<dbReference type="InterPro" id="IPR022663">
    <property type="entry name" value="DapB_C"/>
</dbReference>
<dbReference type="InterPro" id="IPR000846">
    <property type="entry name" value="DapB_N"/>
</dbReference>
<dbReference type="InterPro" id="IPR022664">
    <property type="entry name" value="DapB_N_CS"/>
</dbReference>
<dbReference type="InterPro" id="IPR023940">
    <property type="entry name" value="DHDPR_bac"/>
</dbReference>
<dbReference type="InterPro" id="IPR036291">
    <property type="entry name" value="NAD(P)-bd_dom_sf"/>
</dbReference>
<dbReference type="NCBIfam" id="TIGR00036">
    <property type="entry name" value="dapB"/>
    <property type="match status" value="1"/>
</dbReference>
<dbReference type="PANTHER" id="PTHR20836:SF0">
    <property type="entry name" value="4-HYDROXY-TETRAHYDRODIPICOLINATE REDUCTASE 1, CHLOROPLASTIC-RELATED"/>
    <property type="match status" value="1"/>
</dbReference>
<dbReference type="PANTHER" id="PTHR20836">
    <property type="entry name" value="DIHYDRODIPICOLINATE REDUCTASE"/>
    <property type="match status" value="1"/>
</dbReference>
<dbReference type="Pfam" id="PF05173">
    <property type="entry name" value="DapB_C"/>
    <property type="match status" value="1"/>
</dbReference>
<dbReference type="Pfam" id="PF01113">
    <property type="entry name" value="DapB_N"/>
    <property type="match status" value="1"/>
</dbReference>
<dbReference type="PIRSF" id="PIRSF000161">
    <property type="entry name" value="DHPR"/>
    <property type="match status" value="1"/>
</dbReference>
<dbReference type="SUPFAM" id="SSF55347">
    <property type="entry name" value="Glyceraldehyde-3-phosphate dehydrogenase-like, C-terminal domain"/>
    <property type="match status" value="1"/>
</dbReference>
<dbReference type="SUPFAM" id="SSF51735">
    <property type="entry name" value="NAD(P)-binding Rossmann-fold domains"/>
    <property type="match status" value="1"/>
</dbReference>
<dbReference type="PROSITE" id="PS01298">
    <property type="entry name" value="DAPB"/>
    <property type="match status" value="1"/>
</dbReference>
<feature type="chain" id="PRO_1000189757" description="4-hydroxy-tetrahydrodipicolinate reductase">
    <location>
        <begin position="1"/>
        <end position="255"/>
    </location>
</feature>
<feature type="active site" description="Proton donor/acceptor" evidence="1">
    <location>
        <position position="145"/>
    </location>
</feature>
<feature type="active site" description="Proton donor" evidence="1">
    <location>
        <position position="149"/>
    </location>
</feature>
<feature type="binding site" evidence="1">
    <location>
        <begin position="9"/>
        <end position="14"/>
    </location>
    <ligand>
        <name>NAD(+)</name>
        <dbReference type="ChEBI" id="CHEBI:57540"/>
    </ligand>
</feature>
<feature type="binding site" evidence="1">
    <location>
        <position position="35"/>
    </location>
    <ligand>
        <name>NAD(+)</name>
        <dbReference type="ChEBI" id="CHEBI:57540"/>
    </ligand>
</feature>
<feature type="binding site" evidence="1">
    <location>
        <begin position="89"/>
        <end position="91"/>
    </location>
    <ligand>
        <name>NAD(+)</name>
        <dbReference type="ChEBI" id="CHEBI:57540"/>
    </ligand>
</feature>
<feature type="binding site" evidence="1">
    <location>
        <begin position="115"/>
        <end position="118"/>
    </location>
    <ligand>
        <name>NAD(+)</name>
        <dbReference type="ChEBI" id="CHEBI:57540"/>
    </ligand>
</feature>
<feature type="binding site" evidence="1">
    <location>
        <position position="146"/>
    </location>
    <ligand>
        <name>(S)-2,3,4,5-tetrahydrodipicolinate</name>
        <dbReference type="ChEBI" id="CHEBI:16845"/>
    </ligand>
</feature>
<feature type="binding site" evidence="1">
    <location>
        <begin position="155"/>
        <end position="156"/>
    </location>
    <ligand>
        <name>(S)-2,3,4,5-tetrahydrodipicolinate</name>
        <dbReference type="ChEBI" id="CHEBI:16845"/>
    </ligand>
</feature>